<feature type="chain" id="PRO_0000192328" description="Ribosomal protein L11 methyltransferase">
    <location>
        <begin position="1"/>
        <end position="254"/>
    </location>
</feature>
<feature type="binding site" evidence="1 3 4 5">
    <location>
        <position position="107"/>
    </location>
    <ligand>
        <name>S-adenosyl-L-methionine</name>
        <dbReference type="ChEBI" id="CHEBI:59789"/>
    </ligand>
</feature>
<feature type="binding site" evidence="1 3 4 5">
    <location>
        <position position="128"/>
    </location>
    <ligand>
        <name>S-adenosyl-L-methionine</name>
        <dbReference type="ChEBI" id="CHEBI:59789"/>
    </ligand>
</feature>
<feature type="binding site" evidence="1 3 4 5">
    <location>
        <position position="149"/>
    </location>
    <ligand>
        <name>S-adenosyl-L-methionine</name>
        <dbReference type="ChEBI" id="CHEBI:59789"/>
    </ligand>
</feature>
<feature type="binding site" evidence="3 4 5">
    <location>
        <position position="175"/>
    </location>
    <ligand>
        <name>S-adenosyl-L-methionine</name>
        <dbReference type="ChEBI" id="CHEBI:59789"/>
    </ligand>
</feature>
<feature type="binding site" evidence="1 3 4 5">
    <location>
        <position position="191"/>
    </location>
    <ligand>
        <name>S-adenosyl-L-methionine</name>
        <dbReference type="ChEBI" id="CHEBI:59789"/>
    </ligand>
</feature>
<feature type="sequence conflict" description="In Ref. 1; BAC67244." evidence="7" ref="1">
    <original>P</original>
    <variation>S</variation>
    <location>
        <position position="225"/>
    </location>
</feature>
<feature type="strand" evidence="24">
    <location>
        <begin position="2"/>
        <end position="8"/>
    </location>
</feature>
<feature type="turn" evidence="24">
    <location>
        <begin position="10"/>
        <end position="13"/>
    </location>
</feature>
<feature type="helix" evidence="24">
    <location>
        <begin position="14"/>
        <end position="16"/>
    </location>
</feature>
<feature type="helix" evidence="24">
    <location>
        <begin position="17"/>
        <end position="22"/>
    </location>
</feature>
<feature type="strand" evidence="24">
    <location>
        <begin position="27"/>
        <end position="31"/>
    </location>
</feature>
<feature type="strand" evidence="24">
    <location>
        <begin position="34"/>
        <end position="41"/>
    </location>
</feature>
<feature type="strand" evidence="24">
    <location>
        <begin position="50"/>
        <end position="53"/>
    </location>
</feature>
<feature type="helix" evidence="22">
    <location>
        <begin position="56"/>
        <end position="66"/>
    </location>
</feature>
<feature type="strand" evidence="22">
    <location>
        <begin position="70"/>
        <end position="72"/>
    </location>
</feature>
<feature type="strand" evidence="22">
    <location>
        <begin position="75"/>
        <end position="78"/>
    </location>
</feature>
<feature type="strand" evidence="22">
    <location>
        <begin position="86"/>
        <end position="92"/>
    </location>
</feature>
<feature type="strand" evidence="23">
    <location>
        <begin position="97"/>
        <end position="99"/>
    </location>
</feature>
<feature type="helix" evidence="22">
    <location>
        <begin position="105"/>
        <end position="117"/>
    </location>
</feature>
<feature type="strand" evidence="22">
    <location>
        <begin position="123"/>
        <end position="128"/>
    </location>
</feature>
<feature type="helix" evidence="22">
    <location>
        <begin position="133"/>
        <end position="140"/>
    </location>
</feature>
<feature type="strand" evidence="22">
    <location>
        <begin position="144"/>
        <end position="150"/>
    </location>
</feature>
<feature type="helix" evidence="22">
    <location>
        <begin position="152"/>
        <end position="154"/>
    </location>
</feature>
<feature type="helix" evidence="22">
    <location>
        <begin position="155"/>
        <end position="164"/>
    </location>
</feature>
<feature type="strand" evidence="22">
    <location>
        <begin position="170"/>
        <end position="174"/>
    </location>
</feature>
<feature type="helix" evidence="22">
    <location>
        <begin position="176"/>
        <end position="179"/>
    </location>
</feature>
<feature type="helix" evidence="22">
    <location>
        <begin position="180"/>
        <end position="182"/>
    </location>
</feature>
<feature type="strand" evidence="22">
    <location>
        <begin position="185"/>
        <end position="191"/>
    </location>
</feature>
<feature type="helix" evidence="22">
    <location>
        <begin position="194"/>
        <end position="207"/>
    </location>
</feature>
<feature type="strand" evidence="22">
    <location>
        <begin position="208"/>
        <end position="220"/>
    </location>
</feature>
<feature type="helix" evidence="22">
    <location>
        <begin position="221"/>
        <end position="223"/>
    </location>
</feature>
<feature type="helix" evidence="22">
    <location>
        <begin position="224"/>
        <end position="233"/>
    </location>
</feature>
<feature type="strand" evidence="22">
    <location>
        <begin position="237"/>
        <end position="244"/>
    </location>
</feature>
<feature type="strand" evidence="22">
    <location>
        <begin position="247"/>
        <end position="253"/>
    </location>
</feature>
<dbReference type="EC" id="2.1.1.-" evidence="1 8"/>
<dbReference type="EMBL" id="AB103400">
    <property type="protein sequence ID" value="BAC67244.1"/>
    <property type="molecule type" value="Genomic_DNA"/>
</dbReference>
<dbReference type="EMBL" id="AP008226">
    <property type="protein sequence ID" value="BAD70479.1"/>
    <property type="molecule type" value="Genomic_DNA"/>
</dbReference>
<dbReference type="RefSeq" id="WP_011228100.1">
    <property type="nucleotide sequence ID" value="NC_006461.1"/>
</dbReference>
<dbReference type="RefSeq" id="YP_143922.1">
    <property type="nucleotide sequence ID" value="NC_006461.1"/>
</dbReference>
<dbReference type="PDB" id="1UFK">
    <property type="method" value="X-ray"/>
    <property type="resolution" value="1.90 A"/>
    <property type="chains" value="A=1-254"/>
</dbReference>
<dbReference type="PDB" id="2NXC">
    <property type="method" value="X-ray"/>
    <property type="resolution" value="1.59 A"/>
    <property type="chains" value="A=1-254"/>
</dbReference>
<dbReference type="PDB" id="2NXE">
    <property type="method" value="X-ray"/>
    <property type="resolution" value="1.75 A"/>
    <property type="chains" value="A/B=1-254"/>
</dbReference>
<dbReference type="PDB" id="2NXJ">
    <property type="method" value="X-ray"/>
    <property type="resolution" value="2.30 A"/>
    <property type="chains" value="A/B=1-254"/>
</dbReference>
<dbReference type="PDB" id="2NXN">
    <property type="method" value="X-ray"/>
    <property type="resolution" value="2.40 A"/>
    <property type="chains" value="A=1-254"/>
</dbReference>
<dbReference type="PDB" id="2ZBP">
    <property type="method" value="X-ray"/>
    <property type="resolution" value="2.30 A"/>
    <property type="chains" value="A=1-254"/>
</dbReference>
<dbReference type="PDB" id="2ZBQ">
    <property type="method" value="X-ray"/>
    <property type="resolution" value="2.40 A"/>
    <property type="chains" value="A=1-254"/>
</dbReference>
<dbReference type="PDB" id="2ZBR">
    <property type="method" value="X-ray"/>
    <property type="resolution" value="1.90 A"/>
    <property type="chains" value="A=1-254"/>
</dbReference>
<dbReference type="PDB" id="3CJQ">
    <property type="method" value="X-ray"/>
    <property type="resolution" value="2.70 A"/>
    <property type="chains" value="A/D/G=1-254"/>
</dbReference>
<dbReference type="PDB" id="3CJR">
    <property type="method" value="X-ray"/>
    <property type="resolution" value="2.05 A"/>
    <property type="chains" value="A=1-254"/>
</dbReference>
<dbReference type="PDB" id="3CJS">
    <property type="method" value="X-ray"/>
    <property type="resolution" value="1.37 A"/>
    <property type="chains" value="A=1-59"/>
</dbReference>
<dbReference type="PDB" id="3CJT">
    <property type="method" value="X-ray"/>
    <property type="resolution" value="2.30 A"/>
    <property type="chains" value="A/C/E/G/I/K/M/O=1-254"/>
</dbReference>
<dbReference type="PDB" id="3EGV">
    <property type="method" value="X-ray"/>
    <property type="resolution" value="1.75 A"/>
    <property type="chains" value="A=1-254"/>
</dbReference>
<dbReference type="PDBsum" id="1UFK"/>
<dbReference type="PDBsum" id="2NXC"/>
<dbReference type="PDBsum" id="2NXE"/>
<dbReference type="PDBsum" id="2NXJ"/>
<dbReference type="PDBsum" id="2NXN"/>
<dbReference type="PDBsum" id="2ZBP"/>
<dbReference type="PDBsum" id="2ZBQ"/>
<dbReference type="PDBsum" id="2ZBR"/>
<dbReference type="PDBsum" id="3CJQ"/>
<dbReference type="PDBsum" id="3CJR"/>
<dbReference type="PDBsum" id="3CJS"/>
<dbReference type="PDBsum" id="3CJT"/>
<dbReference type="PDBsum" id="3EGV"/>
<dbReference type="SMR" id="Q84BQ9"/>
<dbReference type="DIP" id="DIP-44643N"/>
<dbReference type="IntAct" id="Q84BQ9">
    <property type="interactions" value="2"/>
</dbReference>
<dbReference type="MINT" id="Q84BQ9"/>
<dbReference type="EnsemblBacteria" id="BAD70479">
    <property type="protein sequence ID" value="BAD70479"/>
    <property type="gene ID" value="BAD70479"/>
</dbReference>
<dbReference type="GeneID" id="3168879"/>
<dbReference type="KEGG" id="ttj:TTHA0656"/>
<dbReference type="PATRIC" id="fig|300852.9.peg.650"/>
<dbReference type="eggNOG" id="COG2264">
    <property type="taxonomic scope" value="Bacteria"/>
</dbReference>
<dbReference type="HOGENOM" id="CLU_049382_3_1_0"/>
<dbReference type="PhylomeDB" id="Q84BQ9"/>
<dbReference type="BRENDA" id="2.1.1.244">
    <property type="organism ID" value="2305"/>
</dbReference>
<dbReference type="EvolutionaryTrace" id="Q84BQ9"/>
<dbReference type="Proteomes" id="UP000000532">
    <property type="component" value="Chromosome"/>
</dbReference>
<dbReference type="GO" id="GO:0005737">
    <property type="term" value="C:cytoplasm"/>
    <property type="evidence" value="ECO:0007669"/>
    <property type="project" value="UniProtKB-SubCell"/>
</dbReference>
<dbReference type="GO" id="GO:0016279">
    <property type="term" value="F:protein-lysine N-methyltransferase activity"/>
    <property type="evidence" value="ECO:0007669"/>
    <property type="project" value="RHEA"/>
</dbReference>
<dbReference type="GO" id="GO:0032259">
    <property type="term" value="P:methylation"/>
    <property type="evidence" value="ECO:0007669"/>
    <property type="project" value="UniProtKB-KW"/>
</dbReference>
<dbReference type="CDD" id="cd02440">
    <property type="entry name" value="AdoMet_MTases"/>
    <property type="match status" value="1"/>
</dbReference>
<dbReference type="Gene3D" id="1.20.5.1350">
    <property type="match status" value="1"/>
</dbReference>
<dbReference type="Gene3D" id="3.30.70.1170">
    <property type="entry name" value="Sun protein, domain 3"/>
    <property type="match status" value="1"/>
</dbReference>
<dbReference type="Gene3D" id="3.40.50.150">
    <property type="entry name" value="Vaccinia Virus protein VP39"/>
    <property type="match status" value="1"/>
</dbReference>
<dbReference type="HAMAP" id="MF_00735">
    <property type="entry name" value="Methyltr_PrmA"/>
    <property type="match status" value="1"/>
</dbReference>
<dbReference type="InterPro" id="IPR050078">
    <property type="entry name" value="Ribosomal_L11_MeTrfase_PrmA"/>
</dbReference>
<dbReference type="InterPro" id="IPR004498">
    <property type="entry name" value="Ribosomal_PrmA_MeTrfase"/>
</dbReference>
<dbReference type="InterPro" id="IPR029063">
    <property type="entry name" value="SAM-dependent_MTases_sf"/>
</dbReference>
<dbReference type="NCBIfam" id="NF001790">
    <property type="entry name" value="PRK00517.3-3"/>
    <property type="match status" value="1"/>
</dbReference>
<dbReference type="PANTHER" id="PTHR43648">
    <property type="entry name" value="ELECTRON TRANSFER FLAVOPROTEIN BETA SUBUNIT LYSINE METHYLTRANSFERASE"/>
    <property type="match status" value="1"/>
</dbReference>
<dbReference type="PANTHER" id="PTHR43648:SF1">
    <property type="entry name" value="ELECTRON TRANSFER FLAVOPROTEIN BETA SUBUNIT LYSINE METHYLTRANSFERASE"/>
    <property type="match status" value="1"/>
</dbReference>
<dbReference type="Pfam" id="PF06325">
    <property type="entry name" value="PrmA"/>
    <property type="match status" value="1"/>
</dbReference>
<dbReference type="SUPFAM" id="SSF53335">
    <property type="entry name" value="S-adenosyl-L-methionine-dependent methyltransferases"/>
    <property type="match status" value="1"/>
</dbReference>
<accession>Q84BQ9</accession>
<accession>Q5SKI7</accession>
<keyword id="KW-0002">3D-structure</keyword>
<keyword id="KW-0963">Cytoplasm</keyword>
<keyword id="KW-0489">Methyltransferase</keyword>
<keyword id="KW-1185">Reference proteome</keyword>
<keyword id="KW-0949">S-adenosyl-L-methionine</keyword>
<keyword id="KW-0808">Transferase</keyword>
<proteinExistence type="evidence at protein level"/>
<evidence type="ECO:0000255" key="1">
    <source>
        <dbReference type="HAMAP-Rule" id="MF_00735"/>
    </source>
</evidence>
<evidence type="ECO:0000269" key="2">
    <source>
    </source>
</evidence>
<evidence type="ECO:0000269" key="3">
    <source>
    </source>
</evidence>
<evidence type="ECO:0000269" key="4">
    <source>
    </source>
</evidence>
<evidence type="ECO:0000269" key="5">
    <source ref="6"/>
</evidence>
<evidence type="ECO:0000303" key="6">
    <source>
    </source>
</evidence>
<evidence type="ECO:0000305" key="7"/>
<evidence type="ECO:0000305" key="8">
    <source>
    </source>
</evidence>
<evidence type="ECO:0007744" key="9">
    <source>
        <dbReference type="PDB" id="1UFK"/>
    </source>
</evidence>
<evidence type="ECO:0007744" key="10">
    <source>
        <dbReference type="PDB" id="2NXC"/>
    </source>
</evidence>
<evidence type="ECO:0007744" key="11">
    <source>
        <dbReference type="PDB" id="2NXE"/>
    </source>
</evidence>
<evidence type="ECO:0007744" key="12">
    <source>
        <dbReference type="PDB" id="2NXJ"/>
    </source>
</evidence>
<evidence type="ECO:0007744" key="13">
    <source>
        <dbReference type="PDB" id="2NXN"/>
    </source>
</evidence>
<evidence type="ECO:0007744" key="14">
    <source>
        <dbReference type="PDB" id="2ZBP"/>
    </source>
</evidence>
<evidence type="ECO:0007744" key="15">
    <source>
        <dbReference type="PDB" id="2ZBQ"/>
    </source>
</evidence>
<evidence type="ECO:0007744" key="16">
    <source>
        <dbReference type="PDB" id="2ZBR"/>
    </source>
</evidence>
<evidence type="ECO:0007744" key="17">
    <source>
        <dbReference type="PDB" id="3CJQ"/>
    </source>
</evidence>
<evidence type="ECO:0007744" key="18">
    <source>
        <dbReference type="PDB" id="3CJR"/>
    </source>
</evidence>
<evidence type="ECO:0007744" key="19">
    <source>
        <dbReference type="PDB" id="3CJS"/>
    </source>
</evidence>
<evidence type="ECO:0007744" key="20">
    <source>
        <dbReference type="PDB" id="3CJT"/>
    </source>
</evidence>
<evidence type="ECO:0007744" key="21">
    <source>
        <dbReference type="PDB" id="3EGV"/>
    </source>
</evidence>
<evidence type="ECO:0007829" key="22">
    <source>
        <dbReference type="PDB" id="2NXC"/>
    </source>
</evidence>
<evidence type="ECO:0007829" key="23">
    <source>
        <dbReference type="PDB" id="2NXE"/>
    </source>
</evidence>
<evidence type="ECO:0007829" key="24">
    <source>
        <dbReference type="PDB" id="3CJS"/>
    </source>
</evidence>
<name>PRMA_THET8</name>
<reference key="1">
    <citation type="journal article" date="2003" name="Acta Crystallogr. D">
        <title>Crystallization and preliminary X-ray diffraction analysis of ribosomal protein L11 methyltransferase from Thermus thermophilus HB8.</title>
        <authorList>
            <consortium name="RIKEN structural genomics initiative (RSGI)"/>
        </authorList>
    </citation>
    <scope>NUCLEOTIDE SEQUENCE [GENOMIC DNA]</scope>
    <scope>CRYSTALLIZATION</scope>
</reference>
<reference key="2">
    <citation type="submission" date="2004-11" db="EMBL/GenBank/DDBJ databases">
        <title>Complete genome sequence of Thermus thermophilus HB8.</title>
        <authorList>
            <person name="Masui R."/>
            <person name="Kurokawa K."/>
            <person name="Nakagawa N."/>
            <person name="Tokunaga F."/>
            <person name="Koyama Y."/>
            <person name="Shibata T."/>
            <person name="Oshima T."/>
            <person name="Yokoyama S."/>
            <person name="Yasunaga T."/>
            <person name="Kuramitsu S."/>
        </authorList>
    </citation>
    <scope>NUCLEOTIDE SEQUENCE [LARGE SCALE GENOMIC DNA]</scope>
    <source>
        <strain>ATCC 27634 / DSM 579 / HB8</strain>
    </source>
</reference>
<reference key="3">
    <citation type="journal article" date="2004" name="J. Bacteriol.">
        <title>Thermus thermophilus L11 methyltransferase, PrmA, is dispensable for growth and preferentially modifies free ribosomal protein L11 prior to ribosome assembly.</title>
        <authorList>
            <person name="Cameron D.M."/>
            <person name="Gregory S.T."/>
            <person name="Thompson J."/>
            <person name="Suh M.-J."/>
            <person name="Limbach P.A."/>
            <person name="Dahlberg A.E."/>
        </authorList>
    </citation>
    <scope>FUNCTION</scope>
    <scope>CATALYTIC ACTIVITY</scope>
    <scope>DISRUPTION PHENOTYPE</scope>
    <source>
        <strain>ATCC 27634 / DSM 579 / HB8</strain>
    </source>
</reference>
<reference evidence="9" key="4">
    <citation type="submission" date="2003-11" db="PDB data bank">
        <title>Crystal structure of TT0836.</title>
        <authorList>
            <person name="Kaminishi T."/>
            <person name="Sakai H."/>
            <person name="Takemoto-Hori C."/>
            <person name="Terada T."/>
            <person name="Nakagawa N."/>
            <person name="Maoka N."/>
            <person name="Kuramitsu S."/>
            <person name="Shirouzu M."/>
            <person name="Yokoyama S."/>
        </authorList>
    </citation>
    <scope>X-RAY CRYSTALLOGRAPHY (1.9 ANGSTROMS) OF 1-254</scope>
</reference>
<reference evidence="10 11 12 13" key="5">
    <citation type="journal article" date="2007" name="EMBO J.">
        <title>Recognition of ribosomal protein L11 by the protein trimethyltransferase PrmA.</title>
        <authorList>
            <person name="Demirci H."/>
            <person name="Gregory S.T."/>
            <person name="Dahlberg A.E."/>
            <person name="Jogl G."/>
        </authorList>
    </citation>
    <scope>X-RAY CRYSTALLOGRAPHY (1.59 ANGSTROMS) OF APOENZYME AND IN COMPLEXES WITH S-ADENOSYL-L-METHIONINE AND RIBOSOMAL PROTEIN L11</scope>
    <scope>DOMAIN</scope>
    <source>
        <strain>ATCC 27634 / DSM 579 / HB8</strain>
    </source>
</reference>
<reference evidence="14 15 16" key="6">
    <citation type="submission" date="2007-10" db="PDB data bank">
        <title>Crystal structure of ribosomal protein L11 methyltransferase from Thermus thermophilus.</title>
        <authorList>
            <person name="Kaminishi T."/>
            <person name="Sakai H."/>
            <person name="Takemoto-Hori C."/>
            <person name="Terada T."/>
            <person name="Nakagawa N."/>
            <person name="Maoka N."/>
            <person name="Kuramitsu S."/>
            <person name="Shirouzu M."/>
            <person name="Yokoyama S."/>
        </authorList>
    </citation>
    <scope>X-RAY CRYSTALLOGRAPHY (1.90 ANGSTROMS) IN COMPLEXES WITH S-ADENOSYL-L-METHIONINE; S-ADENOSYL-L-HOMOCYSTEINE AND S-ADENOSYL-ORNITHINE</scope>
</reference>
<reference evidence="17 18 19 20 21" key="7">
    <citation type="journal article" date="2008" name="Structure">
        <title>Multiple-site trimethylation of ribosomal protein L11 by the PrmA methyltransferase.</title>
        <authorList>
            <person name="Demirci H."/>
            <person name="Gregory S.T."/>
            <person name="Dahlberg A.E."/>
            <person name="Jogl G."/>
        </authorList>
    </citation>
    <scope>X-RAY CRYSTALLOGRAPHY (1.37 ANGSTROMS) OF 1-59 IN COMPLEXES WITH S-ADENOSYL-L-METHIONINE; S-ADENOSYL-L-HOMOCYSTEINE AND RIBOSOMAL PROTEIN L11</scope>
    <scope>DOMAIN</scope>
</reference>
<organism>
    <name type="scientific">Thermus thermophilus (strain ATCC 27634 / DSM 579 / HB8)</name>
    <dbReference type="NCBI Taxonomy" id="300852"/>
    <lineage>
        <taxon>Bacteria</taxon>
        <taxon>Thermotogati</taxon>
        <taxon>Deinococcota</taxon>
        <taxon>Deinococci</taxon>
        <taxon>Thermales</taxon>
        <taxon>Thermaceae</taxon>
        <taxon>Thermus</taxon>
    </lineage>
</organism>
<sequence>MWVYRLKGTLEALDPILPGLFDGGARGLWEREGEVWAFFPAPVDLPYEGVWEEVGDEDWLEAWRRDLKPALAPPFVVLAPWHTWEGAEIPLVIEPGMAFGTGHHETTRLALKALARHLRPGDKVLDLGTGSGVLAIAAEKLGGKALGVDIDPMVLPQAEANAKRNGVRPRFLEGSLEAALPFGPFDLLVANLYAELHAALAPRYREALVPGGRALLTGILKDRAPLVREAMAGAGFRPLEEAAEGEWVLLAYGR</sequence>
<gene>
    <name evidence="1 6" type="primary">prmA</name>
    <name type="ordered locus">TTHA0656</name>
</gene>
<comment type="function">
    <text evidence="2">Methylates ribosomal protein L11 (PubMed:15317787). Preferentially recognizes free L11 before its incorporation into 50S subunits (PubMed:15317787). This function is dispensable for growth and thermostability (PubMed:15317787).</text>
</comment>
<comment type="catalytic activity">
    <reaction evidence="1 8">
        <text>L-lysyl-[protein] + 3 S-adenosyl-L-methionine = N(6),N(6),N(6)-trimethyl-L-lysyl-[protein] + 3 S-adenosyl-L-homocysteine + 3 H(+)</text>
        <dbReference type="Rhea" id="RHEA:54192"/>
        <dbReference type="Rhea" id="RHEA-COMP:9752"/>
        <dbReference type="Rhea" id="RHEA-COMP:13826"/>
        <dbReference type="ChEBI" id="CHEBI:15378"/>
        <dbReference type="ChEBI" id="CHEBI:29969"/>
        <dbReference type="ChEBI" id="CHEBI:57856"/>
        <dbReference type="ChEBI" id="CHEBI:59789"/>
        <dbReference type="ChEBI" id="CHEBI:61961"/>
    </reaction>
</comment>
<comment type="catalytic activity">
    <reaction evidence="8">
        <text>an N-terminal L-alpha-aminoacyl-[protein] + 3 S-adenosyl-L-methionine = an N-terminal trimethyl-L-alpha-aminoacyl-[protein] + 3 S-adenosyl-L-homocysteine + 3 H(+)</text>
        <dbReference type="Rhea" id="RHEA:62916"/>
        <dbReference type="Rhea" id="RHEA-COMP:10636"/>
        <dbReference type="Rhea" id="RHEA-COMP:16230"/>
        <dbReference type="ChEBI" id="CHEBI:15378"/>
        <dbReference type="ChEBI" id="CHEBI:57856"/>
        <dbReference type="ChEBI" id="CHEBI:59789"/>
        <dbReference type="ChEBI" id="CHEBI:78597"/>
        <dbReference type="ChEBI" id="CHEBI:146135"/>
    </reaction>
</comment>
<comment type="interaction">
    <interactant intactId="EBI-7202232">
        <id>Q84BQ9</id>
    </interactant>
    <interactant intactId="EBI-15714407">
        <id>P36238</id>
        <label>rplK</label>
    </interactant>
    <organismsDiffer>true</organismsDiffer>
    <experiments>2</experiments>
</comment>
<comment type="subcellular location">
    <subcellularLocation>
        <location evidence="1">Cytoplasm</location>
    </subcellularLocation>
</comment>
<comment type="domain">
    <text evidence="3 4">Contains an N-terminal substrate recognition domain and a C-terminal methyltransferase domain, connected by a flexible linker.</text>
</comment>
<comment type="disruption phenotype">
    <text evidence="2">Mutant contains unmethylated protein L11 (PubMed:15317787). Null mutant is perfectly viable (PubMed:15317787).</text>
</comment>
<comment type="similarity">
    <text evidence="1 7">Belongs to the methyltransferase superfamily. PrmA family.</text>
</comment>
<protein>
    <recommendedName>
        <fullName evidence="1 7">Ribosomal protein L11 methyltransferase</fullName>
        <shortName evidence="1 7">L11 Mtase</shortName>
        <ecNumber evidence="1 8">2.1.1.-</ecNumber>
    </recommendedName>
</protein>